<reference key="1">
    <citation type="submission" date="2007-05" db="EMBL/GenBank/DDBJ databases">
        <title>Complete sequence of chromosome of Staphylococcus aureus subsp. aureus JH9.</title>
        <authorList>
            <consortium name="US DOE Joint Genome Institute"/>
            <person name="Copeland A."/>
            <person name="Lucas S."/>
            <person name="Lapidus A."/>
            <person name="Barry K."/>
            <person name="Detter J.C."/>
            <person name="Glavina del Rio T."/>
            <person name="Hammon N."/>
            <person name="Israni S."/>
            <person name="Pitluck S."/>
            <person name="Chain P."/>
            <person name="Malfatti S."/>
            <person name="Shin M."/>
            <person name="Vergez L."/>
            <person name="Schmutz J."/>
            <person name="Larimer F."/>
            <person name="Land M."/>
            <person name="Hauser L."/>
            <person name="Kyrpides N."/>
            <person name="Kim E."/>
            <person name="Tomasz A."/>
            <person name="Richardson P."/>
        </authorList>
    </citation>
    <scope>NUCLEOTIDE SEQUENCE [LARGE SCALE GENOMIC DNA]</scope>
    <source>
        <strain>JH9</strain>
    </source>
</reference>
<name>Y1672_STAA9</name>
<protein>
    <recommendedName>
        <fullName evidence="1">UPF0473 protein SaurJH9_1672</fullName>
    </recommendedName>
</protein>
<evidence type="ECO:0000255" key="1">
    <source>
        <dbReference type="HAMAP-Rule" id="MF_01448"/>
    </source>
</evidence>
<comment type="similarity">
    <text evidence="1">Belongs to the UPF0473 family.</text>
</comment>
<feature type="chain" id="PRO_1000087505" description="UPF0473 protein SaurJH9_1672">
    <location>
        <begin position="1"/>
        <end position="102"/>
    </location>
</feature>
<sequence length="102" mass="11949">MTEHNHDSQLEINNEEELLTLFDEEGNEVLYRKVLEFYHPEFKKEYVILAEEGAQSDEDDMIELVPMINEPDESGDGGKLVPIETDEEWDMIEEVVNTEMEE</sequence>
<gene>
    <name type="ordered locus">SaurJH9_1672</name>
</gene>
<organism>
    <name type="scientific">Staphylococcus aureus (strain JH9)</name>
    <dbReference type="NCBI Taxonomy" id="359786"/>
    <lineage>
        <taxon>Bacteria</taxon>
        <taxon>Bacillati</taxon>
        <taxon>Bacillota</taxon>
        <taxon>Bacilli</taxon>
        <taxon>Bacillales</taxon>
        <taxon>Staphylococcaceae</taxon>
        <taxon>Staphylococcus</taxon>
    </lineage>
</organism>
<accession>A5ITE0</accession>
<dbReference type="EMBL" id="CP000703">
    <property type="protein sequence ID" value="ABQ49463.1"/>
    <property type="molecule type" value="Genomic_DNA"/>
</dbReference>
<dbReference type="RefSeq" id="WP_000134779.1">
    <property type="nucleotide sequence ID" value="NC_009487.1"/>
</dbReference>
<dbReference type="KEGG" id="saj:SaurJH9_1672"/>
<dbReference type="HOGENOM" id="CLU_146610_2_1_9"/>
<dbReference type="HAMAP" id="MF_01448">
    <property type="entry name" value="UPF0473"/>
    <property type="match status" value="1"/>
</dbReference>
<dbReference type="InterPro" id="IPR009711">
    <property type="entry name" value="UPF0473"/>
</dbReference>
<dbReference type="NCBIfam" id="NF010214">
    <property type="entry name" value="PRK13678.1-1"/>
    <property type="match status" value="1"/>
</dbReference>
<dbReference type="PANTHER" id="PTHR40066">
    <property type="entry name" value="UPF0473 PROTEIN CBO2561/CLC_2432"/>
    <property type="match status" value="1"/>
</dbReference>
<dbReference type="PANTHER" id="PTHR40066:SF1">
    <property type="entry name" value="UPF0473 PROTEIN CBO2561_CLC_2432"/>
    <property type="match status" value="1"/>
</dbReference>
<dbReference type="Pfam" id="PF06949">
    <property type="entry name" value="DUF1292"/>
    <property type="match status" value="1"/>
</dbReference>
<proteinExistence type="inferred from homology"/>